<feature type="chain" id="PRO_0000051279" description="Transducin-like enhancer protein 2">
    <location>
        <begin position="1"/>
        <end position="767"/>
    </location>
</feature>
<feature type="repeat" description="WD 1">
    <location>
        <begin position="479"/>
        <end position="517"/>
    </location>
</feature>
<feature type="repeat" description="WD 2">
    <location>
        <begin position="525"/>
        <end position="564"/>
    </location>
</feature>
<feature type="repeat" description="WD 3">
    <location>
        <begin position="569"/>
        <end position="608"/>
    </location>
</feature>
<feature type="repeat" description="WD 4">
    <location>
        <begin position="611"/>
        <end position="650"/>
    </location>
</feature>
<feature type="repeat" description="WD 5">
    <location>
        <begin position="693"/>
        <end position="732"/>
    </location>
</feature>
<feature type="repeat" description="WD 6">
    <location>
        <begin position="734"/>
        <end position="766"/>
    </location>
</feature>
<feature type="region of interest" description="Q domain" evidence="2">
    <location>
        <begin position="1"/>
        <end position="152"/>
    </location>
</feature>
<feature type="region of interest" description="GP domain" evidence="2">
    <location>
        <begin position="153"/>
        <end position="215"/>
    </location>
</feature>
<feature type="region of interest" description="Disordered" evidence="5">
    <location>
        <begin position="198"/>
        <end position="257"/>
    </location>
</feature>
<feature type="region of interest" description="CcN domain" evidence="2">
    <location>
        <begin position="216"/>
        <end position="279"/>
    </location>
</feature>
<feature type="region of interest" description="Disordered" evidence="5">
    <location>
        <begin position="264"/>
        <end position="283"/>
    </location>
</feature>
<feature type="region of interest" description="SP domain" evidence="2">
    <location>
        <begin position="280"/>
        <end position="447"/>
    </location>
</feature>
<feature type="region of interest" description="Disordered" evidence="5">
    <location>
        <begin position="296"/>
        <end position="346"/>
    </location>
</feature>
<feature type="short sequence motif" description="Nuclear localization signal" evidence="4">
    <location>
        <begin position="238"/>
        <end position="242"/>
    </location>
</feature>
<feature type="compositionally biased region" description="Basic and acidic residues" evidence="5">
    <location>
        <begin position="198"/>
        <end position="212"/>
    </location>
</feature>
<feature type="compositionally biased region" description="Low complexity" evidence="5">
    <location>
        <begin position="296"/>
        <end position="309"/>
    </location>
</feature>
<feature type="compositionally biased region" description="Polar residues" evidence="5">
    <location>
        <begin position="323"/>
        <end position="346"/>
    </location>
</feature>
<feature type="modified residue" description="Phosphoserine; by CK2" evidence="4">
    <location>
        <position position="253"/>
    </location>
</feature>
<feature type="modified residue" description="Phosphoserine; by CDK1" evidence="4">
    <location>
        <position position="274"/>
    </location>
</feature>
<feature type="modified residue" description="Phosphothreonine; by CDK1" evidence="4">
    <location>
        <position position="278"/>
    </location>
</feature>
<feature type="modified residue" description="Phosphoserine" evidence="3">
    <location>
        <position position="306"/>
    </location>
</feature>
<gene>
    <name type="primary">Tle2</name>
    <name type="synonym">Grg2</name>
</gene>
<name>TLE2_MOUSE</name>
<protein>
    <recommendedName>
        <fullName>Transducin-like enhancer protein 2</fullName>
    </recommendedName>
</protein>
<keyword id="KW-0539">Nucleus</keyword>
<keyword id="KW-0597">Phosphoprotein</keyword>
<keyword id="KW-1185">Reference proteome</keyword>
<keyword id="KW-0677">Repeat</keyword>
<keyword id="KW-0678">Repressor</keyword>
<keyword id="KW-0804">Transcription</keyword>
<keyword id="KW-0805">Transcription regulation</keyword>
<keyword id="KW-0832">Ubl conjugation</keyword>
<keyword id="KW-0853">WD repeat</keyword>
<keyword id="KW-0879">Wnt signaling pathway</keyword>
<dbReference type="EMBL" id="AF145958">
    <property type="protein sequence ID" value="AAD37694.1"/>
    <property type="molecule type" value="mRNA"/>
</dbReference>
<dbReference type="CCDS" id="CCDS24063.1"/>
<dbReference type="RefSeq" id="NP_062699.1">
    <property type="nucleotide sequence ID" value="NM_019725.3"/>
</dbReference>
<dbReference type="RefSeq" id="XP_006513647.1">
    <property type="nucleotide sequence ID" value="XM_006513584.4"/>
</dbReference>
<dbReference type="SMR" id="Q9WVB2"/>
<dbReference type="FunCoup" id="Q9WVB2">
    <property type="interactions" value="769"/>
</dbReference>
<dbReference type="STRING" id="10090.ENSMUSP00000121125"/>
<dbReference type="GlyGen" id="Q9WVB2">
    <property type="glycosylation" value="2 sites, 1 O-linked glycan (1 site)"/>
</dbReference>
<dbReference type="iPTMnet" id="Q9WVB2"/>
<dbReference type="PhosphoSitePlus" id="Q9WVB2"/>
<dbReference type="PaxDb" id="10090-ENSMUSP00000121125"/>
<dbReference type="PeptideAtlas" id="Q9WVB2"/>
<dbReference type="ProteomicsDB" id="260660"/>
<dbReference type="Antibodypedia" id="23107">
    <property type="antibodies" value="211 antibodies from 31 providers"/>
</dbReference>
<dbReference type="DNASU" id="21886"/>
<dbReference type="Ensembl" id="ENSMUST00000146358.8">
    <property type="protein sequence ID" value="ENSMUSP00000121125.2"/>
    <property type="gene ID" value="ENSMUSG00000034771.16"/>
</dbReference>
<dbReference type="GeneID" id="21886"/>
<dbReference type="KEGG" id="mmu:21886"/>
<dbReference type="UCSC" id="uc007gis.2">
    <property type="organism name" value="mouse"/>
</dbReference>
<dbReference type="AGR" id="MGI:104635"/>
<dbReference type="CTD" id="7089"/>
<dbReference type="MGI" id="MGI:104635">
    <property type="gene designation" value="Tle2"/>
</dbReference>
<dbReference type="VEuPathDB" id="HostDB:ENSMUSG00000034771"/>
<dbReference type="eggNOG" id="KOG0639">
    <property type="taxonomic scope" value="Eukaryota"/>
</dbReference>
<dbReference type="GeneTree" id="ENSGT01030000234519"/>
<dbReference type="InParanoid" id="Q9WVB2"/>
<dbReference type="OMA" id="AKDERNH"/>
<dbReference type="OrthoDB" id="2624652at2759"/>
<dbReference type="PhylomeDB" id="Q9WVB2"/>
<dbReference type="TreeFam" id="TF314167"/>
<dbReference type="Reactome" id="R-MMU-201722">
    <property type="pathway name" value="Formation of the beta-catenin:TCF transactivating complex"/>
</dbReference>
<dbReference type="Reactome" id="R-MMU-3769402">
    <property type="pathway name" value="Deactivation of the beta-catenin transactivating complex"/>
</dbReference>
<dbReference type="Reactome" id="R-MMU-4641265">
    <property type="pathway name" value="Repression of WNT target genes"/>
</dbReference>
<dbReference type="BioGRID-ORCS" id="21886">
    <property type="hits" value="2 hits in 77 CRISPR screens"/>
</dbReference>
<dbReference type="PRO" id="PR:Q9WVB2"/>
<dbReference type="Proteomes" id="UP000000589">
    <property type="component" value="Chromosome 10"/>
</dbReference>
<dbReference type="RNAct" id="Q9WVB2">
    <property type="molecule type" value="protein"/>
</dbReference>
<dbReference type="Bgee" id="ENSMUSG00000034771">
    <property type="expression patterns" value="Expressed in cerebellar cortex and 215 other cell types or tissues"/>
</dbReference>
<dbReference type="ExpressionAtlas" id="Q9WVB2">
    <property type="expression patterns" value="baseline and differential"/>
</dbReference>
<dbReference type="GO" id="GO:0005925">
    <property type="term" value="C:focal adhesion"/>
    <property type="evidence" value="ECO:0007669"/>
    <property type="project" value="Ensembl"/>
</dbReference>
<dbReference type="GO" id="GO:0016604">
    <property type="term" value="C:nuclear body"/>
    <property type="evidence" value="ECO:0007669"/>
    <property type="project" value="Ensembl"/>
</dbReference>
<dbReference type="GO" id="GO:0003714">
    <property type="term" value="F:transcription corepressor activity"/>
    <property type="evidence" value="ECO:0007669"/>
    <property type="project" value="Ensembl"/>
</dbReference>
<dbReference type="GO" id="GO:0090090">
    <property type="term" value="P:negative regulation of canonical Wnt signaling pathway"/>
    <property type="evidence" value="ECO:0007669"/>
    <property type="project" value="Ensembl"/>
</dbReference>
<dbReference type="GO" id="GO:0016055">
    <property type="term" value="P:Wnt signaling pathway"/>
    <property type="evidence" value="ECO:0007669"/>
    <property type="project" value="UniProtKB-KW"/>
</dbReference>
<dbReference type="FunFam" id="2.130.10.10:FF:000001">
    <property type="entry name" value="transducin-like enhancer protein 3 isoform X1"/>
    <property type="match status" value="1"/>
</dbReference>
<dbReference type="Gene3D" id="2.130.10.10">
    <property type="entry name" value="YVTN repeat-like/Quinoprotein amine dehydrogenase"/>
    <property type="match status" value="1"/>
</dbReference>
<dbReference type="InterPro" id="IPR005617">
    <property type="entry name" value="Groucho/TLE_N"/>
</dbReference>
<dbReference type="InterPro" id="IPR009146">
    <property type="entry name" value="Groucho_enhance"/>
</dbReference>
<dbReference type="InterPro" id="IPR015943">
    <property type="entry name" value="WD40/YVTN_repeat-like_dom_sf"/>
</dbReference>
<dbReference type="InterPro" id="IPR019775">
    <property type="entry name" value="WD40_repeat_CS"/>
</dbReference>
<dbReference type="InterPro" id="IPR036322">
    <property type="entry name" value="WD40_repeat_dom_sf"/>
</dbReference>
<dbReference type="InterPro" id="IPR001680">
    <property type="entry name" value="WD40_rpt"/>
</dbReference>
<dbReference type="PANTHER" id="PTHR10814">
    <property type="entry name" value="TRANSDUCIN-LIKE ENHANCER PROTEIN"/>
    <property type="match status" value="1"/>
</dbReference>
<dbReference type="PANTHER" id="PTHR10814:SF4">
    <property type="entry name" value="TRANSDUCIN-LIKE ENHANCER PROTEIN 2"/>
    <property type="match status" value="1"/>
</dbReference>
<dbReference type="Pfam" id="PF03920">
    <property type="entry name" value="TLE_N"/>
    <property type="match status" value="2"/>
</dbReference>
<dbReference type="Pfam" id="PF00400">
    <property type="entry name" value="WD40"/>
    <property type="match status" value="6"/>
</dbReference>
<dbReference type="PRINTS" id="PR01850">
    <property type="entry name" value="GROUCHOFAMLY"/>
</dbReference>
<dbReference type="SMART" id="SM00320">
    <property type="entry name" value="WD40"/>
    <property type="match status" value="6"/>
</dbReference>
<dbReference type="SUPFAM" id="SSF50978">
    <property type="entry name" value="WD40 repeat-like"/>
    <property type="match status" value="1"/>
</dbReference>
<dbReference type="PROSITE" id="PS00678">
    <property type="entry name" value="WD_REPEATS_1"/>
    <property type="match status" value="1"/>
</dbReference>
<dbReference type="PROSITE" id="PS50082">
    <property type="entry name" value="WD_REPEATS_2"/>
    <property type="match status" value="3"/>
</dbReference>
<dbReference type="PROSITE" id="PS50294">
    <property type="entry name" value="WD_REPEATS_REGION"/>
    <property type="match status" value="2"/>
</dbReference>
<accession>Q9WVB2</accession>
<organism>
    <name type="scientific">Mus musculus</name>
    <name type="common">Mouse</name>
    <dbReference type="NCBI Taxonomy" id="10090"/>
    <lineage>
        <taxon>Eukaryota</taxon>
        <taxon>Metazoa</taxon>
        <taxon>Chordata</taxon>
        <taxon>Craniata</taxon>
        <taxon>Vertebrata</taxon>
        <taxon>Euteleostomi</taxon>
        <taxon>Mammalia</taxon>
        <taxon>Eutheria</taxon>
        <taxon>Euarchontoglires</taxon>
        <taxon>Glires</taxon>
        <taxon>Rodentia</taxon>
        <taxon>Myomorpha</taxon>
        <taxon>Muroidea</taxon>
        <taxon>Muridae</taxon>
        <taxon>Murinae</taxon>
        <taxon>Mus</taxon>
        <taxon>Mus</taxon>
    </lineage>
</organism>
<evidence type="ECO:0000250" key="1"/>
<evidence type="ECO:0000250" key="2">
    <source>
        <dbReference type="UniProtKB" id="Q04724"/>
    </source>
</evidence>
<evidence type="ECO:0000250" key="3">
    <source>
        <dbReference type="UniProtKB" id="Q04725"/>
    </source>
</evidence>
<evidence type="ECO:0000255" key="4"/>
<evidence type="ECO:0000256" key="5">
    <source>
        <dbReference type="SAM" id="MobiDB-lite"/>
    </source>
</evidence>
<evidence type="ECO:0000269" key="6">
    <source>
    </source>
</evidence>
<evidence type="ECO:0000305" key="7"/>
<evidence type="ECO:0000305" key="8">
    <source>
    </source>
</evidence>
<proteinExistence type="evidence at transcript level"/>
<sequence>MYPQGRHPTPLQSGQPFKFSVLEICDRIKEEFQFLQAQYHSLKLECEKLASEKTEMQRHYVMAAPHQCPQGGTSYPHWPRLSPLQYYEMSYGLNIEMHKQAEIVKRLSAICAQMVPFLTQEHQQQVLQAVDRAKQVTVGELNSLLGQQNQLQPLSHAPPVPLTPRPAGLVGAGATGLLALSGALAAQAQLVAAVKEDRVGVDAEGSRVDRAASRSSSPSPPESLVEEDHPSSRGGSGKQQRAEDKDLSGPYDSEEDKSDYNLVVDEDQPSEPPSPVTTPCGKAPLCIPARRDLTDSPASLASSLGSPLPRSKDIALNDLPTGTPASRSCGTSPPQDSSTPGPSSASHLCQLAAQPAAPTDSIALRSPLTLSSPFTSSFSLGSHSTLNGDLSMPGSYVGLHLSPQVSSSVVYGRSPLQMAFESHPHLRGSSVSLPGIPVAKPAYSFHVSADGQMQPVPFPSDALVGTGIPRHARQLHTLAHGEVVCAVTISSSTQHVYTGGKGCVKVWDVGQPGSKTPVAQLDCLNRDNYIRSCKLLPDGQSLIVGGEASTLSIWDLAAPTPRIKAELTSSAPACYALAVSPDAKVCFSCCSDGNIVVWDLQNQAMVRQFQGHTDGASCIDISDYGTRLWTGGLDNTVRCWDLREGRQLQQHDFSSQIFSLGHCPNQDWLAVGMESSHVEVLHVRKPEKYQLRLHESCVLSLKFASCGRWFVSTGKDNLLNAWRTPYGASIFQSKESSSVLSCDISRNNKYIVTGSGDKKATVYEVVY</sequence>
<comment type="function">
    <text evidence="1">Transcriptional corepressor that binds to a number of transcription factors. Inhibits the transcriptional activation mediated by CTNNB1 and TCF family members in Wnt signaling. The effects of full-length TLE family members may be modulated by association with dominant-negative AES (By similarity).</text>
</comment>
<comment type="subunit">
    <text evidence="3">Homooligomer and heterooligomer with other family members (By similarity). Binds LEF1, TCF7, TCF7L1, TCF7L2, UTY, HES1 and HES5 (By similarity).</text>
</comment>
<comment type="subcellular location">
    <subcellularLocation>
        <location>Nucleus</location>
    </subcellularLocation>
</comment>
<comment type="tissue specificity">
    <text evidence="6">Expressed in bone marrow-derived macrophages.</text>
</comment>
<comment type="induction">
    <text evidence="6">Repressed during TNFSF11/RANKL-induced osteoclast differentiation.</text>
</comment>
<comment type="domain">
    <text evidence="8">WD repeat Groucho/TLE family members are characterized by 5 regions, a glutamine-rich Q domain, a glycine/proline-rich GP domain, a central CcN domain, containing a nuclear localization signal, and a serine/proline-rich SP domain. The most highly conserved are the N-terminal Q domain and the C-terminal WD-repeat domain.</text>
</comment>
<comment type="PTM">
    <text evidence="3">Ubiquitinated by XIAP/BIRC4.</text>
</comment>
<comment type="similarity">
    <text evidence="7">Belongs to the WD repeat Groucho/TLE family.</text>
</comment>
<reference key="1">
    <citation type="journal article" date="2001" name="Mol. Cell. Biol.">
        <title>The E2A-HLF oncoprotein activates Groucho-related genes and suppresses Runx1.</title>
        <authorList>
            <person name="Dang J."/>
            <person name="Inukai T."/>
            <person name="Kurosawa H."/>
            <person name="Goi K."/>
            <person name="Inaba T."/>
            <person name="Lenny N.T."/>
            <person name="Downing J.R."/>
            <person name="Stifani S."/>
            <person name="Look A.T."/>
        </authorList>
    </citation>
    <scope>NUCLEOTIDE SEQUENCE [MRNA]</scope>
</reference>
<reference key="2">
    <citation type="journal article" date="2008" name="Genome Biol.">
        <title>The Groucho/TLE/Grg family of transcriptional co-repressors.</title>
        <authorList>
            <person name="Jennings B.H."/>
            <person name="Ish-Horowicz D."/>
        </authorList>
    </citation>
    <scope>REVIEW</scope>
</reference>
<reference key="3">
    <citation type="journal article" date="2013" name="J. Biol. Chem.">
        <title>The paired-box homeodomain transcription factor Pax6 binds to the upstream region of the TRAP gene promoter and suppresses receptor activator of NF-kappaB ligand (RANKL)-induced osteoclast differentiation.</title>
        <authorList>
            <person name="Kogawa M."/>
            <person name="Hisatake K."/>
            <person name="Atkins G.J."/>
            <person name="Findlay D.M."/>
            <person name="Enoki Y."/>
            <person name="Sato T."/>
            <person name="Gray P.C."/>
            <person name="Kanesaki-Yatsuka Y."/>
            <person name="Anderson P.H."/>
            <person name="Wada S."/>
            <person name="Kato N."/>
            <person name="Fukuda A."/>
            <person name="Katayama S."/>
            <person name="Tsujimoto M."/>
            <person name="Yoda T."/>
            <person name="Suda T."/>
            <person name="Okazaki Y."/>
            <person name="Matsumoto M."/>
        </authorList>
    </citation>
    <scope>TISSUE SPECIFICITY</scope>
    <scope>INDUCTION</scope>
</reference>